<keyword id="KW-0004">4Fe-4S</keyword>
<keyword id="KW-0963">Cytoplasm</keyword>
<keyword id="KW-1015">Disulfide bond</keyword>
<keyword id="KW-0408">Iron</keyword>
<keyword id="KW-0411">Iron-sulfur</keyword>
<keyword id="KW-0479">Metal-binding</keyword>
<keyword id="KW-0489">Methyltransferase</keyword>
<keyword id="KW-0698">rRNA processing</keyword>
<keyword id="KW-0949">S-adenosyl-L-methionine</keyword>
<keyword id="KW-0808">Transferase</keyword>
<keyword id="KW-0819">tRNA processing</keyword>
<organism>
    <name type="scientific">Yersinia pseudotuberculosis serotype I (strain IP32953)</name>
    <dbReference type="NCBI Taxonomy" id="273123"/>
    <lineage>
        <taxon>Bacteria</taxon>
        <taxon>Pseudomonadati</taxon>
        <taxon>Pseudomonadota</taxon>
        <taxon>Gammaproteobacteria</taxon>
        <taxon>Enterobacterales</taxon>
        <taxon>Yersiniaceae</taxon>
        <taxon>Yersinia</taxon>
    </lineage>
</organism>
<feature type="chain" id="PRO_0000350543" description="Dual-specificity RNA methyltransferase RlmN">
    <location>
        <begin position="1"/>
        <end position="398"/>
    </location>
</feature>
<feature type="domain" description="Radical SAM core" evidence="2">
    <location>
        <begin position="125"/>
        <end position="364"/>
    </location>
</feature>
<feature type="active site" description="Proton acceptor" evidence="1">
    <location>
        <position position="119"/>
    </location>
</feature>
<feature type="active site" description="S-methylcysteine intermediate" evidence="1">
    <location>
        <position position="369"/>
    </location>
</feature>
<feature type="binding site" evidence="1">
    <location>
        <position position="139"/>
    </location>
    <ligand>
        <name>[4Fe-4S] cluster</name>
        <dbReference type="ChEBI" id="CHEBI:49883"/>
        <note>4Fe-4S-S-AdoMet</note>
    </ligand>
</feature>
<feature type="binding site" evidence="1">
    <location>
        <position position="143"/>
    </location>
    <ligand>
        <name>[4Fe-4S] cluster</name>
        <dbReference type="ChEBI" id="CHEBI:49883"/>
        <note>4Fe-4S-S-AdoMet</note>
    </ligand>
</feature>
<feature type="binding site" evidence="1">
    <location>
        <position position="146"/>
    </location>
    <ligand>
        <name>[4Fe-4S] cluster</name>
        <dbReference type="ChEBI" id="CHEBI:49883"/>
        <note>4Fe-4S-S-AdoMet</note>
    </ligand>
</feature>
<feature type="binding site" evidence="1">
    <location>
        <begin position="193"/>
        <end position="194"/>
    </location>
    <ligand>
        <name>S-adenosyl-L-methionine</name>
        <dbReference type="ChEBI" id="CHEBI:59789"/>
    </ligand>
</feature>
<feature type="binding site" evidence="1">
    <location>
        <position position="225"/>
    </location>
    <ligand>
        <name>S-adenosyl-L-methionine</name>
        <dbReference type="ChEBI" id="CHEBI:59789"/>
    </ligand>
</feature>
<feature type="binding site" evidence="1">
    <location>
        <begin position="247"/>
        <end position="249"/>
    </location>
    <ligand>
        <name>S-adenosyl-L-methionine</name>
        <dbReference type="ChEBI" id="CHEBI:59789"/>
    </ligand>
</feature>
<feature type="binding site" evidence="1">
    <location>
        <position position="326"/>
    </location>
    <ligand>
        <name>S-adenosyl-L-methionine</name>
        <dbReference type="ChEBI" id="CHEBI:59789"/>
    </ligand>
</feature>
<feature type="disulfide bond" description="(transient)" evidence="1">
    <location>
        <begin position="132"/>
        <end position="369"/>
    </location>
</feature>
<reference key="1">
    <citation type="journal article" date="2004" name="Proc. Natl. Acad. Sci. U.S.A.">
        <title>Insights into the evolution of Yersinia pestis through whole-genome comparison with Yersinia pseudotuberculosis.</title>
        <authorList>
            <person name="Chain P.S.G."/>
            <person name="Carniel E."/>
            <person name="Larimer F.W."/>
            <person name="Lamerdin J."/>
            <person name="Stoutland P.O."/>
            <person name="Regala W.M."/>
            <person name="Georgescu A.M."/>
            <person name="Vergez L.M."/>
            <person name="Land M.L."/>
            <person name="Motin V.L."/>
            <person name="Brubaker R.R."/>
            <person name="Fowler J."/>
            <person name="Hinnebusch J."/>
            <person name="Marceau M."/>
            <person name="Medigue C."/>
            <person name="Simonet M."/>
            <person name="Chenal-Francisque V."/>
            <person name="Souza B."/>
            <person name="Dacheux D."/>
            <person name="Elliott J.M."/>
            <person name="Derbise A."/>
            <person name="Hauser L.J."/>
            <person name="Garcia E."/>
        </authorList>
    </citation>
    <scope>NUCLEOTIDE SEQUENCE [LARGE SCALE GENOMIC DNA]</scope>
    <source>
        <strain>IP32953</strain>
    </source>
</reference>
<sequence>MSEQLLTASTPIDAAPLSDNTVQTTAPATSKINLLDLNRQQMREFFAEMGEKPFRADQVMKWMYHYCYDDFEQMTDINKGLRAKLQRVAEIRAPEVAEEQRSVDGTIKWAIKVGDQQVETVYIPEADRATLCVSSQVGCALECKFCSTAQQGFNRNLRVSEIIGQVWRAAKIIGSLKSTGTRPITNVVMMGMGEPLLNLNNVVPAMDIMMDDFGFGLSKRRVTLSTSGVVPALDKLGDMIDVALAISLHAPTDDIRDEIVPINRKYNIETFLAAVRRYLDKSKANGGRVTVEYVMLDHINDSTEQAHQLAECLKDTPCKINLIPWNPFPGAPYGRSSNSRVDRFSKVLMEYGFTTIVRKTRGDDIDAACGQLAGEVIDRTKRTLKKKMAGEPIAIKTV</sequence>
<evidence type="ECO:0000255" key="1">
    <source>
        <dbReference type="HAMAP-Rule" id="MF_01849"/>
    </source>
</evidence>
<evidence type="ECO:0000255" key="2">
    <source>
        <dbReference type="PROSITE-ProRule" id="PRU01266"/>
    </source>
</evidence>
<proteinExistence type="inferred from homology"/>
<protein>
    <recommendedName>
        <fullName evidence="1">Dual-specificity RNA methyltransferase RlmN</fullName>
        <ecNumber evidence="1">2.1.1.192</ecNumber>
    </recommendedName>
    <alternativeName>
        <fullName evidence="1">23S rRNA (adenine(2503)-C(2))-methyltransferase</fullName>
    </alternativeName>
    <alternativeName>
        <fullName evidence="1">23S rRNA m2A2503 methyltransferase</fullName>
    </alternativeName>
    <alternativeName>
        <fullName evidence="1">Ribosomal RNA large subunit methyltransferase N</fullName>
    </alternativeName>
    <alternativeName>
        <fullName evidence="1">tRNA (adenine(37)-C(2))-methyltransferase</fullName>
    </alternativeName>
    <alternativeName>
        <fullName evidence="1">tRNA m2A37 methyltransferase</fullName>
    </alternativeName>
</protein>
<accession>Q667Z6</accession>
<dbReference type="EC" id="2.1.1.192" evidence="1"/>
<dbReference type="EMBL" id="BX936398">
    <property type="protein sequence ID" value="CAH22082.1"/>
    <property type="molecule type" value="Genomic_DNA"/>
</dbReference>
<dbReference type="RefSeq" id="WP_002209820.1">
    <property type="nucleotide sequence ID" value="NZ_CP009712.1"/>
</dbReference>
<dbReference type="SMR" id="Q667Z6"/>
<dbReference type="KEGG" id="ypo:BZ17_3786"/>
<dbReference type="KEGG" id="yps:YPTB2844"/>
<dbReference type="PATRIC" id="fig|273123.14.peg.3972"/>
<dbReference type="Proteomes" id="UP000001011">
    <property type="component" value="Chromosome"/>
</dbReference>
<dbReference type="GO" id="GO:0005737">
    <property type="term" value="C:cytoplasm"/>
    <property type="evidence" value="ECO:0007669"/>
    <property type="project" value="UniProtKB-SubCell"/>
</dbReference>
<dbReference type="GO" id="GO:0051539">
    <property type="term" value="F:4 iron, 4 sulfur cluster binding"/>
    <property type="evidence" value="ECO:0007669"/>
    <property type="project" value="UniProtKB-UniRule"/>
</dbReference>
<dbReference type="GO" id="GO:0046872">
    <property type="term" value="F:metal ion binding"/>
    <property type="evidence" value="ECO:0007669"/>
    <property type="project" value="UniProtKB-KW"/>
</dbReference>
<dbReference type="GO" id="GO:0070040">
    <property type="term" value="F:rRNA (adenine(2503)-C2-)-methyltransferase activity"/>
    <property type="evidence" value="ECO:0007669"/>
    <property type="project" value="UniProtKB-UniRule"/>
</dbReference>
<dbReference type="GO" id="GO:0019843">
    <property type="term" value="F:rRNA binding"/>
    <property type="evidence" value="ECO:0007669"/>
    <property type="project" value="UniProtKB-UniRule"/>
</dbReference>
<dbReference type="GO" id="GO:0002935">
    <property type="term" value="F:tRNA (adenine(37)-C2)-methyltransferase activity"/>
    <property type="evidence" value="ECO:0007669"/>
    <property type="project" value="UniProtKB-UniRule"/>
</dbReference>
<dbReference type="GO" id="GO:0000049">
    <property type="term" value="F:tRNA binding"/>
    <property type="evidence" value="ECO:0007669"/>
    <property type="project" value="UniProtKB-UniRule"/>
</dbReference>
<dbReference type="GO" id="GO:0070475">
    <property type="term" value="P:rRNA base methylation"/>
    <property type="evidence" value="ECO:0007669"/>
    <property type="project" value="UniProtKB-UniRule"/>
</dbReference>
<dbReference type="GO" id="GO:0030488">
    <property type="term" value="P:tRNA methylation"/>
    <property type="evidence" value="ECO:0007669"/>
    <property type="project" value="UniProtKB-UniRule"/>
</dbReference>
<dbReference type="CDD" id="cd01335">
    <property type="entry name" value="Radical_SAM"/>
    <property type="match status" value="1"/>
</dbReference>
<dbReference type="FunFam" id="1.10.150.530:FF:000001">
    <property type="entry name" value="Dual-specificity RNA methyltransferase RlmN"/>
    <property type="match status" value="1"/>
</dbReference>
<dbReference type="FunFam" id="3.20.20.70:FF:000008">
    <property type="entry name" value="Dual-specificity RNA methyltransferase RlmN"/>
    <property type="match status" value="1"/>
</dbReference>
<dbReference type="Gene3D" id="1.10.150.530">
    <property type="match status" value="1"/>
</dbReference>
<dbReference type="Gene3D" id="3.20.20.70">
    <property type="entry name" value="Aldolase class I"/>
    <property type="match status" value="1"/>
</dbReference>
<dbReference type="HAMAP" id="MF_01849">
    <property type="entry name" value="RNA_methyltr_RlmN"/>
    <property type="match status" value="1"/>
</dbReference>
<dbReference type="InterPro" id="IPR013785">
    <property type="entry name" value="Aldolase_TIM"/>
</dbReference>
<dbReference type="InterPro" id="IPR040072">
    <property type="entry name" value="Methyltransferase_A"/>
</dbReference>
<dbReference type="InterPro" id="IPR048641">
    <property type="entry name" value="RlmN_N"/>
</dbReference>
<dbReference type="InterPro" id="IPR027492">
    <property type="entry name" value="RNA_MTrfase_RlmN"/>
</dbReference>
<dbReference type="InterPro" id="IPR004383">
    <property type="entry name" value="rRNA_lsu_MTrfase_RlmN/Cfr"/>
</dbReference>
<dbReference type="InterPro" id="IPR007197">
    <property type="entry name" value="rSAM"/>
</dbReference>
<dbReference type="NCBIfam" id="NF008396">
    <property type="entry name" value="PRK11194.1"/>
    <property type="match status" value="1"/>
</dbReference>
<dbReference type="NCBIfam" id="TIGR00048">
    <property type="entry name" value="rRNA_mod_RlmN"/>
    <property type="match status" value="1"/>
</dbReference>
<dbReference type="PANTHER" id="PTHR30544">
    <property type="entry name" value="23S RRNA METHYLTRANSFERASE"/>
    <property type="match status" value="1"/>
</dbReference>
<dbReference type="PANTHER" id="PTHR30544:SF5">
    <property type="entry name" value="RADICAL SAM CORE DOMAIN-CONTAINING PROTEIN"/>
    <property type="match status" value="1"/>
</dbReference>
<dbReference type="Pfam" id="PF04055">
    <property type="entry name" value="Radical_SAM"/>
    <property type="match status" value="1"/>
</dbReference>
<dbReference type="Pfam" id="PF21016">
    <property type="entry name" value="RlmN_N"/>
    <property type="match status" value="1"/>
</dbReference>
<dbReference type="PIRSF" id="PIRSF006004">
    <property type="entry name" value="CHP00048"/>
    <property type="match status" value="1"/>
</dbReference>
<dbReference type="SFLD" id="SFLDF00275">
    <property type="entry name" value="adenosine_C2_methyltransferase"/>
    <property type="match status" value="1"/>
</dbReference>
<dbReference type="SFLD" id="SFLDG01062">
    <property type="entry name" value="methyltransferase_(Class_A)"/>
    <property type="match status" value="1"/>
</dbReference>
<dbReference type="SUPFAM" id="SSF102114">
    <property type="entry name" value="Radical SAM enzymes"/>
    <property type="match status" value="1"/>
</dbReference>
<dbReference type="PROSITE" id="PS51918">
    <property type="entry name" value="RADICAL_SAM"/>
    <property type="match status" value="1"/>
</dbReference>
<gene>
    <name evidence="1" type="primary">rlmN</name>
    <name type="ordered locus">YPTB2844</name>
</gene>
<name>RLMN_YERPS</name>
<comment type="function">
    <text evidence="1">Specifically methylates position 2 of adenine 2503 in 23S rRNA and position 2 of adenine 37 in tRNAs. m2A2503 modification seems to play a crucial role in the proofreading step occurring at the peptidyl transferase center and thus would serve to optimize ribosomal fidelity.</text>
</comment>
<comment type="catalytic activity">
    <reaction evidence="1">
        <text>adenosine(2503) in 23S rRNA + 2 reduced [2Fe-2S]-[ferredoxin] + 2 S-adenosyl-L-methionine = 2-methyladenosine(2503) in 23S rRNA + 5'-deoxyadenosine + L-methionine + 2 oxidized [2Fe-2S]-[ferredoxin] + S-adenosyl-L-homocysteine</text>
        <dbReference type="Rhea" id="RHEA:42916"/>
        <dbReference type="Rhea" id="RHEA-COMP:10000"/>
        <dbReference type="Rhea" id="RHEA-COMP:10001"/>
        <dbReference type="Rhea" id="RHEA-COMP:10152"/>
        <dbReference type="Rhea" id="RHEA-COMP:10282"/>
        <dbReference type="ChEBI" id="CHEBI:17319"/>
        <dbReference type="ChEBI" id="CHEBI:33737"/>
        <dbReference type="ChEBI" id="CHEBI:33738"/>
        <dbReference type="ChEBI" id="CHEBI:57844"/>
        <dbReference type="ChEBI" id="CHEBI:57856"/>
        <dbReference type="ChEBI" id="CHEBI:59789"/>
        <dbReference type="ChEBI" id="CHEBI:74411"/>
        <dbReference type="ChEBI" id="CHEBI:74497"/>
        <dbReference type="EC" id="2.1.1.192"/>
    </reaction>
</comment>
<comment type="catalytic activity">
    <reaction evidence="1">
        <text>adenosine(37) in tRNA + 2 reduced [2Fe-2S]-[ferredoxin] + 2 S-adenosyl-L-methionine = 2-methyladenosine(37) in tRNA + 5'-deoxyadenosine + L-methionine + 2 oxidized [2Fe-2S]-[ferredoxin] + S-adenosyl-L-homocysteine</text>
        <dbReference type="Rhea" id="RHEA:43332"/>
        <dbReference type="Rhea" id="RHEA-COMP:10000"/>
        <dbReference type="Rhea" id="RHEA-COMP:10001"/>
        <dbReference type="Rhea" id="RHEA-COMP:10162"/>
        <dbReference type="Rhea" id="RHEA-COMP:10485"/>
        <dbReference type="ChEBI" id="CHEBI:17319"/>
        <dbReference type="ChEBI" id="CHEBI:33737"/>
        <dbReference type="ChEBI" id="CHEBI:33738"/>
        <dbReference type="ChEBI" id="CHEBI:57844"/>
        <dbReference type="ChEBI" id="CHEBI:57856"/>
        <dbReference type="ChEBI" id="CHEBI:59789"/>
        <dbReference type="ChEBI" id="CHEBI:74411"/>
        <dbReference type="ChEBI" id="CHEBI:74497"/>
        <dbReference type="EC" id="2.1.1.192"/>
    </reaction>
</comment>
<comment type="cofactor">
    <cofactor evidence="1">
        <name>[4Fe-4S] cluster</name>
        <dbReference type="ChEBI" id="CHEBI:49883"/>
    </cofactor>
    <text evidence="1">Binds 1 [4Fe-4S] cluster. The cluster is coordinated with 3 cysteines and an exchangeable S-adenosyl-L-methionine.</text>
</comment>
<comment type="subcellular location">
    <subcellularLocation>
        <location evidence="1">Cytoplasm</location>
    </subcellularLocation>
</comment>
<comment type="miscellaneous">
    <text evidence="1">Reaction proceeds by a ping-pong mechanism involving intermediate methylation of a conserved cysteine residue.</text>
</comment>
<comment type="similarity">
    <text evidence="1">Belongs to the radical SAM superfamily. RlmN family.</text>
</comment>